<reference key="1">
    <citation type="journal article" date="2006" name="J. Bacteriol.">
        <title>Complete genome sequence of Yersinia pestis strains Antiqua and Nepal516: evidence of gene reduction in an emerging pathogen.</title>
        <authorList>
            <person name="Chain P.S.G."/>
            <person name="Hu P."/>
            <person name="Malfatti S.A."/>
            <person name="Radnedge L."/>
            <person name="Larimer F."/>
            <person name="Vergez L.M."/>
            <person name="Worsham P."/>
            <person name="Chu M.C."/>
            <person name="Andersen G.L."/>
        </authorList>
    </citation>
    <scope>NUCLEOTIDE SEQUENCE [LARGE SCALE GENOMIC DNA]</scope>
    <source>
        <strain>Nepal516</strain>
    </source>
</reference>
<reference key="2">
    <citation type="submission" date="2009-04" db="EMBL/GenBank/DDBJ databases">
        <title>Yersinia pestis Nepal516A whole genome shotgun sequencing project.</title>
        <authorList>
            <person name="Plunkett G. III"/>
            <person name="Anderson B.D."/>
            <person name="Baumler D.J."/>
            <person name="Burland V."/>
            <person name="Cabot E.L."/>
            <person name="Glasner J.D."/>
            <person name="Mau B."/>
            <person name="Neeno-Eckwall E."/>
            <person name="Perna N.T."/>
            <person name="Munk A.C."/>
            <person name="Tapia R."/>
            <person name="Green L.D."/>
            <person name="Rogers Y.C."/>
            <person name="Detter J.C."/>
            <person name="Bruce D.C."/>
            <person name="Brettin T.S."/>
        </authorList>
    </citation>
    <scope>NUCLEOTIDE SEQUENCE [LARGE SCALE GENOMIC DNA]</scope>
    <source>
        <strain>Nepal516</strain>
    </source>
</reference>
<gene>
    <name evidence="1" type="primary">truB</name>
    <name type="ordered locus">YPN_3238</name>
    <name type="ORF">YP516_3678</name>
</gene>
<accession>Q1CEL5</accession>
<accession>C4GXU5</accession>
<comment type="function">
    <text evidence="1">Responsible for synthesis of pseudouridine from uracil-55 in the psi GC loop of transfer RNAs.</text>
</comment>
<comment type="catalytic activity">
    <reaction evidence="1">
        <text>uridine(55) in tRNA = pseudouridine(55) in tRNA</text>
        <dbReference type="Rhea" id="RHEA:42532"/>
        <dbReference type="Rhea" id="RHEA-COMP:10101"/>
        <dbReference type="Rhea" id="RHEA-COMP:10102"/>
        <dbReference type="ChEBI" id="CHEBI:65314"/>
        <dbReference type="ChEBI" id="CHEBI:65315"/>
        <dbReference type="EC" id="5.4.99.25"/>
    </reaction>
</comment>
<comment type="similarity">
    <text evidence="1">Belongs to the pseudouridine synthase TruB family. Type 1 subfamily.</text>
</comment>
<organism>
    <name type="scientific">Yersinia pestis bv. Antiqua (strain Nepal516)</name>
    <dbReference type="NCBI Taxonomy" id="377628"/>
    <lineage>
        <taxon>Bacteria</taxon>
        <taxon>Pseudomonadati</taxon>
        <taxon>Pseudomonadota</taxon>
        <taxon>Gammaproteobacteria</taxon>
        <taxon>Enterobacterales</taxon>
        <taxon>Yersiniaceae</taxon>
        <taxon>Yersinia</taxon>
    </lineage>
</organism>
<keyword id="KW-0413">Isomerase</keyword>
<keyword id="KW-0819">tRNA processing</keyword>
<evidence type="ECO:0000255" key="1">
    <source>
        <dbReference type="HAMAP-Rule" id="MF_01080"/>
    </source>
</evidence>
<dbReference type="EC" id="5.4.99.25" evidence="1"/>
<dbReference type="EMBL" id="CP000305">
    <property type="protein sequence ID" value="ABG19565.1"/>
    <property type="molecule type" value="Genomic_DNA"/>
</dbReference>
<dbReference type="EMBL" id="ACNQ01000017">
    <property type="protein sequence ID" value="EEO75745.1"/>
    <property type="molecule type" value="Genomic_DNA"/>
</dbReference>
<dbReference type="RefSeq" id="WP_002209256.1">
    <property type="nucleotide sequence ID" value="NZ_ACNQ01000017.1"/>
</dbReference>
<dbReference type="SMR" id="Q1CEL5"/>
<dbReference type="GeneID" id="57975222"/>
<dbReference type="KEGG" id="ypn:YPN_3238"/>
<dbReference type="HOGENOM" id="CLU_032087_0_3_6"/>
<dbReference type="Proteomes" id="UP000008936">
    <property type="component" value="Chromosome"/>
</dbReference>
<dbReference type="GO" id="GO:0003723">
    <property type="term" value="F:RNA binding"/>
    <property type="evidence" value="ECO:0007669"/>
    <property type="project" value="InterPro"/>
</dbReference>
<dbReference type="GO" id="GO:0160148">
    <property type="term" value="F:tRNA pseudouridine(55) synthase activity"/>
    <property type="evidence" value="ECO:0007669"/>
    <property type="project" value="UniProtKB-EC"/>
</dbReference>
<dbReference type="GO" id="GO:1990481">
    <property type="term" value="P:mRNA pseudouridine synthesis"/>
    <property type="evidence" value="ECO:0007669"/>
    <property type="project" value="TreeGrafter"/>
</dbReference>
<dbReference type="GO" id="GO:0031119">
    <property type="term" value="P:tRNA pseudouridine synthesis"/>
    <property type="evidence" value="ECO:0007669"/>
    <property type="project" value="UniProtKB-UniRule"/>
</dbReference>
<dbReference type="CDD" id="cd02573">
    <property type="entry name" value="PseudoU_synth_EcTruB"/>
    <property type="match status" value="1"/>
</dbReference>
<dbReference type="CDD" id="cd21152">
    <property type="entry name" value="PUA_TruB_bacterial"/>
    <property type="match status" value="1"/>
</dbReference>
<dbReference type="FunFam" id="2.30.130.10:FF:000004">
    <property type="entry name" value="tRNA pseudouridine synthase B"/>
    <property type="match status" value="1"/>
</dbReference>
<dbReference type="FunFam" id="3.30.2350.10:FF:000003">
    <property type="entry name" value="tRNA pseudouridine synthase B"/>
    <property type="match status" value="1"/>
</dbReference>
<dbReference type="Gene3D" id="3.30.2350.10">
    <property type="entry name" value="Pseudouridine synthase"/>
    <property type="match status" value="1"/>
</dbReference>
<dbReference type="Gene3D" id="2.30.130.10">
    <property type="entry name" value="PUA domain"/>
    <property type="match status" value="1"/>
</dbReference>
<dbReference type="HAMAP" id="MF_01080">
    <property type="entry name" value="TruB_bact"/>
    <property type="match status" value="1"/>
</dbReference>
<dbReference type="InterPro" id="IPR020103">
    <property type="entry name" value="PsdUridine_synth_cat_dom_sf"/>
</dbReference>
<dbReference type="InterPro" id="IPR002501">
    <property type="entry name" value="PsdUridine_synth_N"/>
</dbReference>
<dbReference type="InterPro" id="IPR015947">
    <property type="entry name" value="PUA-like_sf"/>
</dbReference>
<dbReference type="InterPro" id="IPR036974">
    <property type="entry name" value="PUA_sf"/>
</dbReference>
<dbReference type="InterPro" id="IPR014780">
    <property type="entry name" value="tRNA_psdUridine_synth_TruB"/>
</dbReference>
<dbReference type="InterPro" id="IPR015240">
    <property type="entry name" value="tRNA_sdUridine_synth_fam1_C"/>
</dbReference>
<dbReference type="InterPro" id="IPR032819">
    <property type="entry name" value="TruB_C"/>
</dbReference>
<dbReference type="NCBIfam" id="TIGR00431">
    <property type="entry name" value="TruB"/>
    <property type="match status" value="1"/>
</dbReference>
<dbReference type="PANTHER" id="PTHR13767:SF2">
    <property type="entry name" value="PSEUDOURIDYLATE SYNTHASE TRUB1"/>
    <property type="match status" value="1"/>
</dbReference>
<dbReference type="PANTHER" id="PTHR13767">
    <property type="entry name" value="TRNA-PSEUDOURIDINE SYNTHASE"/>
    <property type="match status" value="1"/>
</dbReference>
<dbReference type="Pfam" id="PF09157">
    <property type="entry name" value="TruB-C_2"/>
    <property type="match status" value="1"/>
</dbReference>
<dbReference type="Pfam" id="PF16198">
    <property type="entry name" value="TruB_C_2"/>
    <property type="match status" value="1"/>
</dbReference>
<dbReference type="Pfam" id="PF01509">
    <property type="entry name" value="TruB_N"/>
    <property type="match status" value="1"/>
</dbReference>
<dbReference type="SUPFAM" id="SSF55120">
    <property type="entry name" value="Pseudouridine synthase"/>
    <property type="match status" value="1"/>
</dbReference>
<dbReference type="SUPFAM" id="SSF88697">
    <property type="entry name" value="PUA domain-like"/>
    <property type="match status" value="1"/>
</dbReference>
<sequence>MGRPRRRGRDINGVLLLDKPLGLSSNDVLQKVKRLFSANRAGHTGALDPLATGMLPICLGEATKFSQFLLDSDKRYRVVARLGQRTDTSDAEGALISEREVNLTQAQIDTALESFRGESQQIPSMYSALKHQGKPLYEYARQGIEVEREARSITVYELLFIRWEGNDLELEIHCSKGTYIRTIIDDLGELLGCGAHVSYLRRLQVATYPSERMVTLEQLTAMVEAAQAEGRSPNPELDSLLLPMDSAVLNFPEVNLLPSVAAYVKQGQPVHVSGAPSEGMVRITEGKERNFIGIGTIAEDGRVAPKRLVVESVEVENLPVENKK</sequence>
<name>TRUB_YERPN</name>
<protein>
    <recommendedName>
        <fullName evidence="1">tRNA pseudouridine synthase B</fullName>
        <ecNumber evidence="1">5.4.99.25</ecNumber>
    </recommendedName>
    <alternativeName>
        <fullName evidence="1">tRNA pseudouridine(55) synthase</fullName>
        <shortName evidence="1">Psi55 synthase</shortName>
    </alternativeName>
    <alternativeName>
        <fullName evidence="1">tRNA pseudouridylate synthase</fullName>
    </alternativeName>
    <alternativeName>
        <fullName evidence="1">tRNA-uridine isomerase</fullName>
    </alternativeName>
</protein>
<feature type="chain" id="PRO_1000084718" description="tRNA pseudouridine synthase B">
    <location>
        <begin position="1"/>
        <end position="324"/>
    </location>
</feature>
<feature type="active site" description="Nucleophile" evidence="1">
    <location>
        <position position="48"/>
    </location>
</feature>
<feature type="binding site" evidence="1">
    <location>
        <position position="43"/>
    </location>
    <ligand>
        <name>substrate</name>
    </ligand>
</feature>
<feature type="binding site" evidence="1">
    <location>
        <position position="76"/>
    </location>
    <ligand>
        <name>substrate</name>
    </ligand>
</feature>
<feature type="binding site" evidence="1">
    <location>
        <position position="179"/>
    </location>
    <ligand>
        <name>substrate</name>
    </ligand>
</feature>
<feature type="binding site" evidence="1">
    <location>
        <position position="200"/>
    </location>
    <ligand>
        <name>substrate</name>
    </ligand>
</feature>
<proteinExistence type="inferred from homology"/>